<organism>
    <name type="scientific">Homo sapiens</name>
    <name type="common">Human</name>
    <dbReference type="NCBI Taxonomy" id="9606"/>
    <lineage>
        <taxon>Eukaryota</taxon>
        <taxon>Metazoa</taxon>
        <taxon>Chordata</taxon>
        <taxon>Craniata</taxon>
        <taxon>Vertebrata</taxon>
        <taxon>Euteleostomi</taxon>
        <taxon>Mammalia</taxon>
        <taxon>Eutheria</taxon>
        <taxon>Euarchontoglires</taxon>
        <taxon>Primates</taxon>
        <taxon>Haplorrhini</taxon>
        <taxon>Catarrhini</taxon>
        <taxon>Hominidae</taxon>
        <taxon>Homo</taxon>
    </lineage>
</organism>
<dbReference type="EMBL" id="AB047240">
    <property type="status" value="NOT_ANNOTATED_CDS"/>
    <property type="molecule type" value="Genomic_DNA"/>
</dbReference>
<dbReference type="BioMuta" id="HGNC:13757"/>
<dbReference type="MassIVE" id="P61583"/>
<dbReference type="AGR" id="HGNC:13757"/>
<dbReference type="GeneCards" id="ERVK-5"/>
<dbReference type="HGNC" id="HGNC:13757">
    <property type="gene designation" value="ERVK-5"/>
</dbReference>
<dbReference type="MIM" id="614012">
    <property type="type" value="gene"/>
</dbReference>
<dbReference type="neXtProt" id="NX_P61583"/>
<dbReference type="PhylomeDB" id="P61583"/>
<dbReference type="Pharos" id="P61583">
    <property type="development level" value="Tdark"/>
</dbReference>
<dbReference type="Proteomes" id="UP000005640">
    <property type="component" value="Unplaced"/>
</dbReference>
<dbReference type="GO" id="GO:0005634">
    <property type="term" value="C:nucleus"/>
    <property type="evidence" value="ECO:0007669"/>
    <property type="project" value="UniProtKB-SubCell"/>
</dbReference>
<feature type="chain" id="PRO_0000186787" description="Endogenous retrovirus group K member 5 Np9 protein">
    <location>
        <begin position="1"/>
        <end position="75"/>
    </location>
</feature>
<feature type="region of interest" description="Disordered" evidence="2">
    <location>
        <begin position="22"/>
        <end position="43"/>
    </location>
</feature>
<feature type="compositionally biased region" description="Basic and acidic residues" evidence="2">
    <location>
        <begin position="32"/>
        <end position="43"/>
    </location>
</feature>
<sequence length="75" mass="8907">MNPSEMQRKGPPQRWCLQVYPTAPKRQRPSRTGHDDDGGFVEKKRGKCGEKQERSDCYCVCVERSRHRRLHFVLY</sequence>
<comment type="function">
    <text evidence="1">May possess a function in tumorigenesis.</text>
</comment>
<comment type="subcellular location">
    <subcellularLocation>
        <location evidence="1">Nucleus</location>
    </subcellularLocation>
    <text evidence="1">When overexpressed.</text>
</comment>
<comment type="miscellaneous">
    <text evidence="1">Protein expressed at very low level.</text>
</comment>
<comment type="miscellaneous">
    <text>Has a type 1 genome. The HERV-K(HML-2) family contains type 1 and type 2 genomes depending on the absence or presence of 292 nucleotides at the 5'-end of the env gene. Np9 proteins are translated from a doubly spliced transcript expressed exclusively by HERV-K(HML-2) type 1 proviral genomes. Np9 proteins share 14 N-terminal amino acids with HERV-K(HML-2) type 2 envelope proteins. The rest of the protein is encoded by a small exon located at the 3' end of the envelope gene. This exon shares the same splice acceptor site and therefore overlaps HERV-K(HML-2) type 2 Rec protein second exon. It is yet translated from an alternate reading frame.</text>
</comment>
<comment type="miscellaneous">
    <text>Intergenic, closest flanking genes being RPL24 and FLJ23047.</text>
</comment>
<proteinExistence type="inferred from homology"/>
<reference key="1">
    <citation type="journal article" date="2001" name="Genomics">
        <title>Transcriptionally active HERV-K genes: identification, isolation, and chromosomal mapping.</title>
        <authorList>
            <person name="Sugimoto J."/>
            <person name="Matsuura N."/>
            <person name="Kinjo Y."/>
            <person name="Takasu N."/>
            <person name="Oda T."/>
            <person name="Jinno Y."/>
        </authorList>
    </citation>
    <scope>NUCLEOTIDE SEQUENCE [GENOMIC DNA]</scope>
</reference>
<reference key="2">
    <citation type="journal article" date="2002" name="Clin. Cancer Res.">
        <title>A novel gene from the human endogenous retrovirus K expressed in transformed cells.</title>
        <authorList>
            <person name="Armbruester V."/>
            <person name="Sauter M."/>
            <person name="Krautkraemer E."/>
            <person name="Meese E.U."/>
            <person name="Kleiman A."/>
            <person name="Best B."/>
            <person name="Roemer K."/>
            <person name="Mueller-Lantzsch N."/>
        </authorList>
    </citation>
    <scope>IDENTIFICATION</scope>
</reference>
<keyword id="KW-0895">ERV</keyword>
<keyword id="KW-0539">Nucleus</keyword>
<keyword id="KW-1185">Reference proteome</keyword>
<keyword id="KW-0814">Transposable element</keyword>
<accession>P61583</accession>
<evidence type="ECO:0000250" key="1"/>
<evidence type="ECO:0000256" key="2">
    <source>
        <dbReference type="SAM" id="MobiDB-lite"/>
    </source>
</evidence>
<gene>
    <name type="primary">ERVK-5</name>
    <name type="synonym">ERVK5</name>
</gene>
<protein>
    <recommendedName>
        <fullName>Endogenous retrovirus group K member 5 Np9 protein</fullName>
    </recommendedName>
    <alternativeName>
        <fullName>Endogenous retrovirus K protein 5</fullName>
    </alternativeName>
    <alternativeName>
        <fullName>HERV-K(II) Np9 protein</fullName>
    </alternativeName>
    <alternativeName>
        <fullName>HERV-K_3q12.3 provirus Np9 protein</fullName>
    </alternativeName>
</protein>
<name>NP5_HUMAN</name>